<proteinExistence type="inferred from homology"/>
<name>SYC_STAA9</name>
<feature type="chain" id="PRO_1000074629" description="Cysteine--tRNA ligase">
    <location>
        <begin position="1"/>
        <end position="466"/>
    </location>
</feature>
<feature type="short sequence motif" description="'HIGH' region">
    <location>
        <begin position="30"/>
        <end position="40"/>
    </location>
</feature>
<feature type="short sequence motif" description="'KMSKS' region">
    <location>
        <begin position="265"/>
        <end position="269"/>
    </location>
</feature>
<feature type="binding site" evidence="1">
    <location>
        <position position="28"/>
    </location>
    <ligand>
        <name>Zn(2+)</name>
        <dbReference type="ChEBI" id="CHEBI:29105"/>
    </ligand>
</feature>
<feature type="binding site" evidence="1">
    <location>
        <position position="208"/>
    </location>
    <ligand>
        <name>Zn(2+)</name>
        <dbReference type="ChEBI" id="CHEBI:29105"/>
    </ligand>
</feature>
<feature type="binding site" evidence="1">
    <location>
        <position position="233"/>
    </location>
    <ligand>
        <name>Zn(2+)</name>
        <dbReference type="ChEBI" id="CHEBI:29105"/>
    </ligand>
</feature>
<feature type="binding site" evidence="1">
    <location>
        <position position="237"/>
    </location>
    <ligand>
        <name>Zn(2+)</name>
        <dbReference type="ChEBI" id="CHEBI:29105"/>
    </ligand>
</feature>
<feature type="binding site" evidence="1">
    <location>
        <position position="268"/>
    </location>
    <ligand>
        <name>ATP</name>
        <dbReference type="ChEBI" id="CHEBI:30616"/>
    </ligand>
</feature>
<sequence length="466" mass="53684">MITLYNTLTRQKEVFKPIEPGKVKMYVCGPTVYNYIHIGNARPAINYDVVRRYFEYQGYNVEYVSNFTDVDDKLIKRSQELNQSVPEIAEKYIAAFHEDVGALNVRKATSNPRVMDHMDDIIQFIKDLVDQGYAYESGGDVYFRTRKFEGYGKLSHQSIDDLKVGARIDAGEHKEDALDFTLWKKAKPGEISWNSPFGEGRPGWHIECSVMAFHELGPTIDIHAGGSDLQFPHHENEIAQSEAHNHAPFANYWMHNGFINIDNEKMSKSLGNFILVHDIIKEVDPDVLRFFMISVHYRSPINYNLELVESARSGLERIRNSYQLIEERAQIATNIENQQTYIDQIDAILNRFETVMNDDFNTANAITAWYDLAKLANKYVLENTTSTEVIDKFKAVYQIFSDVLGVPLKSKNADELLDEDVEKLIEERNEARKNKDFARADEIRDMLKSQNIILEDTPQGVRFKRG</sequence>
<gene>
    <name evidence="1" type="primary">cysS</name>
    <name type="ordered locus">SaurJH9_0552</name>
</gene>
<evidence type="ECO:0000255" key="1">
    <source>
        <dbReference type="HAMAP-Rule" id="MF_00041"/>
    </source>
</evidence>
<dbReference type="EC" id="6.1.1.16" evidence="1"/>
<dbReference type="EMBL" id="CP000703">
    <property type="protein sequence ID" value="ABQ48356.1"/>
    <property type="molecule type" value="Genomic_DNA"/>
</dbReference>
<dbReference type="RefSeq" id="WP_000631969.1">
    <property type="nucleotide sequence ID" value="NC_009487.1"/>
</dbReference>
<dbReference type="SMR" id="A5IQ83"/>
<dbReference type="KEGG" id="saj:SaurJH9_0552"/>
<dbReference type="HOGENOM" id="CLU_013528_0_1_9"/>
<dbReference type="GO" id="GO:0005829">
    <property type="term" value="C:cytosol"/>
    <property type="evidence" value="ECO:0007669"/>
    <property type="project" value="TreeGrafter"/>
</dbReference>
<dbReference type="GO" id="GO:0005524">
    <property type="term" value="F:ATP binding"/>
    <property type="evidence" value="ECO:0007669"/>
    <property type="project" value="UniProtKB-UniRule"/>
</dbReference>
<dbReference type="GO" id="GO:0004817">
    <property type="term" value="F:cysteine-tRNA ligase activity"/>
    <property type="evidence" value="ECO:0007669"/>
    <property type="project" value="UniProtKB-UniRule"/>
</dbReference>
<dbReference type="GO" id="GO:0008270">
    <property type="term" value="F:zinc ion binding"/>
    <property type="evidence" value="ECO:0007669"/>
    <property type="project" value="UniProtKB-UniRule"/>
</dbReference>
<dbReference type="GO" id="GO:0006423">
    <property type="term" value="P:cysteinyl-tRNA aminoacylation"/>
    <property type="evidence" value="ECO:0007669"/>
    <property type="project" value="UniProtKB-UniRule"/>
</dbReference>
<dbReference type="CDD" id="cd00672">
    <property type="entry name" value="CysRS_core"/>
    <property type="match status" value="1"/>
</dbReference>
<dbReference type="FunFam" id="1.20.120.1910:FF:000002">
    <property type="entry name" value="Cysteine--tRNA ligase"/>
    <property type="match status" value="1"/>
</dbReference>
<dbReference type="FunFam" id="3.40.50.620:FF:000009">
    <property type="entry name" value="Cysteine--tRNA ligase"/>
    <property type="match status" value="1"/>
</dbReference>
<dbReference type="Gene3D" id="1.20.120.1910">
    <property type="entry name" value="Cysteine-tRNA ligase, C-terminal anti-codon recognition domain"/>
    <property type="match status" value="1"/>
</dbReference>
<dbReference type="Gene3D" id="3.40.50.620">
    <property type="entry name" value="HUPs"/>
    <property type="match status" value="1"/>
</dbReference>
<dbReference type="HAMAP" id="MF_00041">
    <property type="entry name" value="Cys_tRNA_synth"/>
    <property type="match status" value="1"/>
</dbReference>
<dbReference type="InterPro" id="IPR015803">
    <property type="entry name" value="Cys-tRNA-ligase"/>
</dbReference>
<dbReference type="InterPro" id="IPR015273">
    <property type="entry name" value="Cys-tRNA-synt_Ia_DALR"/>
</dbReference>
<dbReference type="InterPro" id="IPR024909">
    <property type="entry name" value="Cys-tRNA/MSH_ligase"/>
</dbReference>
<dbReference type="InterPro" id="IPR056411">
    <property type="entry name" value="CysS_C"/>
</dbReference>
<dbReference type="InterPro" id="IPR014729">
    <property type="entry name" value="Rossmann-like_a/b/a_fold"/>
</dbReference>
<dbReference type="InterPro" id="IPR032678">
    <property type="entry name" value="tRNA-synt_1_cat_dom"/>
</dbReference>
<dbReference type="InterPro" id="IPR009080">
    <property type="entry name" value="tRNAsynth_Ia_anticodon-bd"/>
</dbReference>
<dbReference type="NCBIfam" id="TIGR00435">
    <property type="entry name" value="cysS"/>
    <property type="match status" value="1"/>
</dbReference>
<dbReference type="PANTHER" id="PTHR10890:SF3">
    <property type="entry name" value="CYSTEINE--TRNA LIGASE, CYTOPLASMIC"/>
    <property type="match status" value="1"/>
</dbReference>
<dbReference type="PANTHER" id="PTHR10890">
    <property type="entry name" value="CYSTEINYL-TRNA SYNTHETASE"/>
    <property type="match status" value="1"/>
</dbReference>
<dbReference type="Pfam" id="PF23493">
    <property type="entry name" value="CysS_C"/>
    <property type="match status" value="1"/>
</dbReference>
<dbReference type="Pfam" id="PF09190">
    <property type="entry name" value="DALR_2"/>
    <property type="match status" value="1"/>
</dbReference>
<dbReference type="Pfam" id="PF01406">
    <property type="entry name" value="tRNA-synt_1e"/>
    <property type="match status" value="1"/>
</dbReference>
<dbReference type="PRINTS" id="PR00983">
    <property type="entry name" value="TRNASYNTHCYS"/>
</dbReference>
<dbReference type="SMART" id="SM00840">
    <property type="entry name" value="DALR_2"/>
    <property type="match status" value="1"/>
</dbReference>
<dbReference type="SUPFAM" id="SSF47323">
    <property type="entry name" value="Anticodon-binding domain of a subclass of class I aminoacyl-tRNA synthetases"/>
    <property type="match status" value="1"/>
</dbReference>
<dbReference type="SUPFAM" id="SSF52374">
    <property type="entry name" value="Nucleotidylyl transferase"/>
    <property type="match status" value="1"/>
</dbReference>
<organism>
    <name type="scientific">Staphylococcus aureus (strain JH9)</name>
    <dbReference type="NCBI Taxonomy" id="359786"/>
    <lineage>
        <taxon>Bacteria</taxon>
        <taxon>Bacillati</taxon>
        <taxon>Bacillota</taxon>
        <taxon>Bacilli</taxon>
        <taxon>Bacillales</taxon>
        <taxon>Staphylococcaceae</taxon>
        <taxon>Staphylococcus</taxon>
    </lineage>
</organism>
<comment type="catalytic activity">
    <reaction evidence="1">
        <text>tRNA(Cys) + L-cysteine + ATP = L-cysteinyl-tRNA(Cys) + AMP + diphosphate</text>
        <dbReference type="Rhea" id="RHEA:17773"/>
        <dbReference type="Rhea" id="RHEA-COMP:9661"/>
        <dbReference type="Rhea" id="RHEA-COMP:9679"/>
        <dbReference type="ChEBI" id="CHEBI:30616"/>
        <dbReference type="ChEBI" id="CHEBI:33019"/>
        <dbReference type="ChEBI" id="CHEBI:35235"/>
        <dbReference type="ChEBI" id="CHEBI:78442"/>
        <dbReference type="ChEBI" id="CHEBI:78517"/>
        <dbReference type="ChEBI" id="CHEBI:456215"/>
        <dbReference type="EC" id="6.1.1.16"/>
    </reaction>
</comment>
<comment type="cofactor">
    <cofactor evidence="1">
        <name>Zn(2+)</name>
        <dbReference type="ChEBI" id="CHEBI:29105"/>
    </cofactor>
    <text evidence="1">Binds 1 zinc ion per subunit.</text>
</comment>
<comment type="subunit">
    <text evidence="1">Monomer.</text>
</comment>
<comment type="subcellular location">
    <subcellularLocation>
        <location evidence="1">Cytoplasm</location>
    </subcellularLocation>
</comment>
<comment type="similarity">
    <text evidence="1">Belongs to the class-I aminoacyl-tRNA synthetase family.</text>
</comment>
<accession>A5IQ83</accession>
<protein>
    <recommendedName>
        <fullName evidence="1">Cysteine--tRNA ligase</fullName>
        <ecNumber evidence="1">6.1.1.16</ecNumber>
    </recommendedName>
    <alternativeName>
        <fullName evidence="1">Cysteinyl-tRNA synthetase</fullName>
        <shortName evidence="1">CysRS</shortName>
    </alternativeName>
</protein>
<keyword id="KW-0030">Aminoacyl-tRNA synthetase</keyword>
<keyword id="KW-0067">ATP-binding</keyword>
<keyword id="KW-0963">Cytoplasm</keyword>
<keyword id="KW-0436">Ligase</keyword>
<keyword id="KW-0479">Metal-binding</keyword>
<keyword id="KW-0547">Nucleotide-binding</keyword>
<keyword id="KW-0648">Protein biosynthesis</keyword>
<keyword id="KW-0862">Zinc</keyword>
<reference key="1">
    <citation type="submission" date="2007-05" db="EMBL/GenBank/DDBJ databases">
        <title>Complete sequence of chromosome of Staphylococcus aureus subsp. aureus JH9.</title>
        <authorList>
            <consortium name="US DOE Joint Genome Institute"/>
            <person name="Copeland A."/>
            <person name="Lucas S."/>
            <person name="Lapidus A."/>
            <person name="Barry K."/>
            <person name="Detter J.C."/>
            <person name="Glavina del Rio T."/>
            <person name="Hammon N."/>
            <person name="Israni S."/>
            <person name="Pitluck S."/>
            <person name="Chain P."/>
            <person name="Malfatti S."/>
            <person name="Shin M."/>
            <person name="Vergez L."/>
            <person name="Schmutz J."/>
            <person name="Larimer F."/>
            <person name="Land M."/>
            <person name="Hauser L."/>
            <person name="Kyrpides N."/>
            <person name="Kim E."/>
            <person name="Tomasz A."/>
            <person name="Richardson P."/>
        </authorList>
    </citation>
    <scope>NUCLEOTIDE SEQUENCE [LARGE SCALE GENOMIC DNA]</scope>
    <source>
        <strain>JH9</strain>
    </source>
</reference>